<gene>
    <name type="primary">luxS</name>
</gene>
<sequence>MPLLDSFTVDHTRMAAPAVRVAKTMKTPHGDTITVFDLRFCRPNLEVMPERGIHTLEHLFAGFMRDHLNGQGVEIIDISPMGCRTGFYMSLIGVPEEQRVADAWKAAMADVLKVTDQRKIPELNEYQCGTYHMHSLEEAQEIAKHILDNGVVVNHNDELALPKEKLQELHI</sequence>
<reference key="1">
    <citation type="journal article" date="2004" name="Microbiology">
        <title>luxS mutants of Serratia defective in autoinducer-2-dependent 'quorum sensing' show strain-dependent impacts on virulence, carbapenem and prodigiosin production.</title>
        <authorList>
            <person name="Coulthurst S.J."/>
            <person name="Kurz C.L."/>
            <person name="Salmond G.P.C."/>
        </authorList>
    </citation>
    <scope>NUCLEOTIDE SEQUENCE [GENOMIC DNA]</scope>
    <source>
        <strain>ATCC 274 / NCDO 740 / NCIB 1377 / NCTC 1377</strain>
    </source>
</reference>
<name>LUXS_SERMA</name>
<keyword id="KW-0071">Autoinducer synthesis</keyword>
<keyword id="KW-0408">Iron</keyword>
<keyword id="KW-0456">Lyase</keyword>
<keyword id="KW-0479">Metal-binding</keyword>
<keyword id="KW-0673">Quorum sensing</keyword>
<protein>
    <recommendedName>
        <fullName>S-ribosylhomocysteine lyase</fullName>
        <ecNumber>4.4.1.21</ecNumber>
    </recommendedName>
    <alternativeName>
        <fullName>AI-2 synthesis protein</fullName>
    </alternativeName>
    <alternativeName>
        <fullName>Autoinducer-2 production protein LuxS</fullName>
    </alternativeName>
</protein>
<comment type="function">
    <text>Involved in the synthesis of autoinducer 2 (AI-2) which is secreted by bacteria and is used to communicate both the cell density and the metabolic potential of the environment. The regulation of gene expression in response to changes in cell density is called quorum sensing. Catalyzes the transformation of S-ribosylhomocysteine (RHC) to homocysteine (HC) and 4,5-dihydroxy-2,3-pentadione (DPD).</text>
</comment>
<comment type="catalytic activity">
    <reaction>
        <text>S-(5-deoxy-D-ribos-5-yl)-L-homocysteine = (S)-4,5-dihydroxypentane-2,3-dione + L-homocysteine</text>
        <dbReference type="Rhea" id="RHEA:17753"/>
        <dbReference type="ChEBI" id="CHEBI:29484"/>
        <dbReference type="ChEBI" id="CHEBI:58195"/>
        <dbReference type="ChEBI" id="CHEBI:58199"/>
        <dbReference type="EC" id="4.4.1.21"/>
    </reaction>
</comment>
<comment type="cofactor">
    <cofactor evidence="1">
        <name>Fe cation</name>
        <dbReference type="ChEBI" id="CHEBI:24875"/>
    </cofactor>
    <text evidence="1">Binds 1 Fe cation per subunit.</text>
</comment>
<comment type="subunit">
    <text evidence="1">Homodimer.</text>
</comment>
<comment type="similarity">
    <text evidence="2">Belongs to the LuxS family.</text>
</comment>
<organism>
    <name type="scientific">Serratia marcescens</name>
    <dbReference type="NCBI Taxonomy" id="615"/>
    <lineage>
        <taxon>Bacteria</taxon>
        <taxon>Pseudomonadati</taxon>
        <taxon>Pseudomonadota</taxon>
        <taxon>Gammaproteobacteria</taxon>
        <taxon>Enterobacterales</taxon>
        <taxon>Yersiniaceae</taxon>
        <taxon>Serratia</taxon>
    </lineage>
</organism>
<evidence type="ECO:0000250" key="1"/>
<evidence type="ECO:0000305" key="2"/>
<accession>Q684Q1</accession>
<feature type="chain" id="PRO_0000172250" description="S-ribosylhomocysteine lyase">
    <location>
        <begin position="1"/>
        <end position="171"/>
    </location>
</feature>
<feature type="binding site" evidence="1">
    <location>
        <position position="54"/>
    </location>
    <ligand>
        <name>Fe cation</name>
        <dbReference type="ChEBI" id="CHEBI:24875"/>
    </ligand>
</feature>
<feature type="binding site" evidence="1">
    <location>
        <position position="58"/>
    </location>
    <ligand>
        <name>Fe cation</name>
        <dbReference type="ChEBI" id="CHEBI:24875"/>
    </ligand>
</feature>
<feature type="binding site" evidence="1">
    <location>
        <position position="128"/>
    </location>
    <ligand>
        <name>Fe cation</name>
        <dbReference type="ChEBI" id="CHEBI:24875"/>
    </ligand>
</feature>
<dbReference type="EC" id="4.4.1.21"/>
<dbReference type="EMBL" id="AJ628150">
    <property type="protein sequence ID" value="CAF31418.1"/>
    <property type="molecule type" value="Genomic_DNA"/>
</dbReference>
<dbReference type="RefSeq" id="WP_004932513.1">
    <property type="nucleotide sequence ID" value="NZ_WVHX01000001.1"/>
</dbReference>
<dbReference type="SMR" id="Q684Q1"/>
<dbReference type="STRING" id="273526.SMDB11_0167"/>
<dbReference type="GeneID" id="93695358"/>
<dbReference type="OrthoDB" id="9788129at2"/>
<dbReference type="GO" id="GO:0005506">
    <property type="term" value="F:iron ion binding"/>
    <property type="evidence" value="ECO:0007669"/>
    <property type="project" value="InterPro"/>
</dbReference>
<dbReference type="GO" id="GO:0043768">
    <property type="term" value="F:S-ribosylhomocysteine lyase activity"/>
    <property type="evidence" value="ECO:0007669"/>
    <property type="project" value="UniProtKB-UniRule"/>
</dbReference>
<dbReference type="GO" id="GO:0009372">
    <property type="term" value="P:quorum sensing"/>
    <property type="evidence" value="ECO:0007669"/>
    <property type="project" value="UniProtKB-UniRule"/>
</dbReference>
<dbReference type="FunFam" id="3.30.1360.80:FF:000001">
    <property type="entry name" value="S-ribosylhomocysteine lyase"/>
    <property type="match status" value="1"/>
</dbReference>
<dbReference type="Gene3D" id="3.30.1360.80">
    <property type="entry name" value="S-ribosylhomocysteinase (LuxS)"/>
    <property type="match status" value="1"/>
</dbReference>
<dbReference type="HAMAP" id="MF_00091">
    <property type="entry name" value="LuxS"/>
    <property type="match status" value="1"/>
</dbReference>
<dbReference type="InterPro" id="IPR037005">
    <property type="entry name" value="LuxS_sf"/>
</dbReference>
<dbReference type="InterPro" id="IPR011249">
    <property type="entry name" value="Metalloenz_LuxS/M16"/>
</dbReference>
<dbReference type="InterPro" id="IPR003815">
    <property type="entry name" value="S-ribosylhomocysteinase"/>
</dbReference>
<dbReference type="NCBIfam" id="NF002602">
    <property type="entry name" value="PRK02260.1-2"/>
    <property type="match status" value="1"/>
</dbReference>
<dbReference type="PANTHER" id="PTHR35799">
    <property type="entry name" value="S-RIBOSYLHOMOCYSTEINE LYASE"/>
    <property type="match status" value="1"/>
</dbReference>
<dbReference type="PANTHER" id="PTHR35799:SF1">
    <property type="entry name" value="S-RIBOSYLHOMOCYSTEINE LYASE"/>
    <property type="match status" value="1"/>
</dbReference>
<dbReference type="Pfam" id="PF02664">
    <property type="entry name" value="LuxS"/>
    <property type="match status" value="1"/>
</dbReference>
<dbReference type="PIRSF" id="PIRSF006160">
    <property type="entry name" value="AI2"/>
    <property type="match status" value="1"/>
</dbReference>
<dbReference type="PRINTS" id="PR01487">
    <property type="entry name" value="LUXSPROTEIN"/>
</dbReference>
<dbReference type="SUPFAM" id="SSF63411">
    <property type="entry name" value="LuxS/MPP-like metallohydrolase"/>
    <property type="match status" value="1"/>
</dbReference>
<proteinExistence type="inferred from homology"/>